<feature type="chain" id="PRO_0000459306" description="Intraflagellar transport protein 54">
    <location>
        <begin position="1"/>
        <end position="465"/>
    </location>
</feature>
<feature type="region of interest" description="Disordered" evidence="2">
    <location>
        <begin position="119"/>
        <end position="301"/>
    </location>
</feature>
<feature type="region of interest" description="Disordered" evidence="2">
    <location>
        <begin position="347"/>
        <end position="366"/>
    </location>
</feature>
<feature type="coiled-coil region" evidence="1">
    <location>
        <begin position="144"/>
        <end position="207"/>
    </location>
</feature>
<feature type="compositionally biased region" description="Basic and acidic residues" evidence="2">
    <location>
        <begin position="146"/>
        <end position="198"/>
    </location>
</feature>
<feature type="compositionally biased region" description="Low complexity" evidence="2">
    <location>
        <begin position="199"/>
        <end position="220"/>
    </location>
</feature>
<feature type="compositionally biased region" description="Basic and acidic residues" evidence="2">
    <location>
        <begin position="222"/>
        <end position="242"/>
    </location>
</feature>
<name>IFT54_GIAIC</name>
<dbReference type="EMBL" id="AACB02000006">
    <property type="protein sequence ID" value="EDO81114.1"/>
    <property type="molecule type" value="Genomic_DNA"/>
</dbReference>
<dbReference type="EMBL" id="AACB03000004">
    <property type="protein sequence ID" value="KAE8302308.1"/>
    <property type="molecule type" value="Genomic_DNA"/>
</dbReference>
<dbReference type="RefSeq" id="XP_001708788.1">
    <property type="nucleotide sequence ID" value="XM_001708736.1"/>
</dbReference>
<dbReference type="SMR" id="A8B976"/>
<dbReference type="STRING" id="184922.A8B976"/>
<dbReference type="EnsemblProtists" id="EDO81114">
    <property type="protein sequence ID" value="EDO81114"/>
    <property type="gene ID" value="GL50803_9098"/>
</dbReference>
<dbReference type="GeneID" id="5701704"/>
<dbReference type="KEGG" id="gla:GL50803_009098"/>
<dbReference type="VEuPathDB" id="GiardiaDB:GL50803_9098"/>
<dbReference type="HOGENOM" id="CLU_588571_0_0_1"/>
<dbReference type="InParanoid" id="A8B976"/>
<dbReference type="OMA" id="MRTELHT"/>
<dbReference type="Proteomes" id="UP000001548">
    <property type="component" value="Chromosome 2"/>
</dbReference>
<dbReference type="GO" id="GO:0097729">
    <property type="term" value="C:9+2 motile cilium"/>
    <property type="evidence" value="ECO:0000314"/>
    <property type="project" value="UniProtKB"/>
</dbReference>
<dbReference type="GO" id="GO:0005930">
    <property type="term" value="C:axoneme"/>
    <property type="evidence" value="ECO:0000314"/>
    <property type="project" value="UniProtKB"/>
</dbReference>
<dbReference type="GO" id="GO:0036064">
    <property type="term" value="C:ciliary basal body"/>
    <property type="evidence" value="ECO:0000314"/>
    <property type="project" value="UniProtKB"/>
</dbReference>
<dbReference type="GO" id="GO:1990900">
    <property type="term" value="C:ciliary pocket collar"/>
    <property type="evidence" value="ECO:0000314"/>
    <property type="project" value="UniProtKB"/>
</dbReference>
<dbReference type="GO" id="GO:0097542">
    <property type="term" value="C:ciliary tip"/>
    <property type="evidence" value="ECO:0000314"/>
    <property type="project" value="UniProtKB"/>
</dbReference>
<dbReference type="GO" id="GO:0030992">
    <property type="term" value="C:intraciliary transport particle B"/>
    <property type="evidence" value="ECO:0000318"/>
    <property type="project" value="GO_Central"/>
</dbReference>
<dbReference type="GO" id="GO:0008017">
    <property type="term" value="F:microtubule binding"/>
    <property type="evidence" value="ECO:0007669"/>
    <property type="project" value="InterPro"/>
</dbReference>
<dbReference type="GO" id="GO:0060271">
    <property type="term" value="P:cilium assembly"/>
    <property type="evidence" value="ECO:0000318"/>
    <property type="project" value="GO_Central"/>
</dbReference>
<dbReference type="GO" id="GO:0035720">
    <property type="term" value="P:intraciliary anterograde transport"/>
    <property type="evidence" value="ECO:0000305"/>
    <property type="project" value="UniProtKB"/>
</dbReference>
<dbReference type="GO" id="GO:0042073">
    <property type="term" value="P:intraciliary transport"/>
    <property type="evidence" value="ECO:0000318"/>
    <property type="project" value="GO_Central"/>
</dbReference>
<dbReference type="GO" id="GO:0035735">
    <property type="term" value="P:intraciliary transport involved in cilium assembly"/>
    <property type="evidence" value="ECO:0000305"/>
    <property type="project" value="UniProtKB"/>
</dbReference>
<dbReference type="GO" id="GO:0070507">
    <property type="term" value="P:regulation of microtubule cytoskeleton organization"/>
    <property type="evidence" value="ECO:0000318"/>
    <property type="project" value="GO_Central"/>
</dbReference>
<dbReference type="FunFam" id="1.10.418.50:FF:000002">
    <property type="entry name" value="Kinesin-like protein"/>
    <property type="match status" value="1"/>
</dbReference>
<dbReference type="Gene3D" id="1.10.418.50">
    <property type="entry name" value="Microtubule-binding protein MIP-T3"/>
    <property type="match status" value="1"/>
</dbReference>
<dbReference type="InterPro" id="IPR018799">
    <property type="entry name" value="TRAF3IP1"/>
</dbReference>
<dbReference type="InterPro" id="IPR040468">
    <property type="entry name" value="TRAF3IP1_N"/>
</dbReference>
<dbReference type="InterPro" id="IPR042576">
    <property type="entry name" value="TRAF3IP1_N_sf"/>
</dbReference>
<dbReference type="PANTHER" id="PTHR31363">
    <property type="entry name" value="TRAF3-INTERACTING PROTEIN 1"/>
    <property type="match status" value="1"/>
</dbReference>
<dbReference type="PANTHER" id="PTHR31363:SF0">
    <property type="entry name" value="TRAF3-INTERACTING PROTEIN 1"/>
    <property type="match status" value="1"/>
</dbReference>
<dbReference type="Pfam" id="PF10243">
    <property type="entry name" value="MIP-T3"/>
    <property type="match status" value="1"/>
</dbReference>
<protein>
    <recommendedName>
        <fullName evidence="4">Intraflagellar transport protein 54</fullName>
        <shortName evidence="4">IFT54</shortName>
    </recommendedName>
    <alternativeName>
        <fullName evidence="8">MT associated TRAF3 interacting protein</fullName>
    </alternativeName>
</protein>
<accession>A8B976</accession>
<keyword id="KW-0966">Cell projection</keyword>
<keyword id="KW-0969">Cilium</keyword>
<keyword id="KW-0970">Cilium biogenesis/degradation</keyword>
<keyword id="KW-0175">Coiled coil</keyword>
<keyword id="KW-0963">Cytoplasm</keyword>
<keyword id="KW-0206">Cytoskeleton</keyword>
<keyword id="KW-0282">Flagellum</keyword>
<keyword id="KW-1185">Reference proteome</keyword>
<gene>
    <name evidence="8" type="ORF">GL50803_009098</name>
    <name evidence="7" type="ORF">GL50803_9098</name>
</gene>
<evidence type="ECO:0000255" key="1"/>
<evidence type="ECO:0000256" key="2">
    <source>
        <dbReference type="SAM" id="MobiDB-lite"/>
    </source>
</evidence>
<evidence type="ECO:0000269" key="3">
    <source>
    </source>
</evidence>
<evidence type="ECO:0000303" key="4">
    <source>
    </source>
</evidence>
<evidence type="ECO:0000305" key="5"/>
<evidence type="ECO:0000305" key="6">
    <source>
    </source>
</evidence>
<evidence type="ECO:0000312" key="7">
    <source>
        <dbReference type="EMBL" id="EDO81114.1"/>
    </source>
</evidence>
<evidence type="ECO:0000312" key="8">
    <source>
        <dbReference type="EMBL" id="KAE8302308.1"/>
    </source>
</evidence>
<evidence type="ECO:0000312" key="9">
    <source>
        <dbReference type="Proteomes" id="UP000001548"/>
    </source>
</evidence>
<organism evidence="7">
    <name type="scientific">Giardia intestinalis (strain ATCC 50803 / WB clone C6)</name>
    <name type="common">Giardia lamblia</name>
    <dbReference type="NCBI Taxonomy" id="184922"/>
    <lineage>
        <taxon>Eukaryota</taxon>
        <taxon>Metamonada</taxon>
        <taxon>Diplomonadida</taxon>
        <taxon>Hexamitidae</taxon>
        <taxon>Giardiinae</taxon>
        <taxon>Giardia</taxon>
    </lineage>
</organism>
<comment type="function">
    <text evidence="6">Component of the intraflagellar transport complex B (IFT-B) involved in flagellar assembly (Probable).</text>
</comment>
<comment type="subcellular location">
    <subcellularLocation>
        <location evidence="3">Cell projection</location>
        <location evidence="3">Cilium</location>
        <location evidence="3">Flagellum</location>
    </subcellularLocation>
    <subcellularLocation>
        <location evidence="3">Cytoplasm</location>
        <location evidence="3">Cytoskeleton</location>
        <location evidence="3">Flagellum axoneme</location>
    </subcellularLocation>
    <subcellularLocation>
        <location evidence="3">Cytoplasm</location>
        <location evidence="3">Cytoskeleton</location>
        <location evidence="3">Flagellum basal body</location>
    </subcellularLocation>
    <text evidence="3">Localizes to the cytoplasmic and membrane-bound portions of each of the eight axonemes, localizing particularly at the flagellar pores and at the distal flagellar tips. Localizes to the basal bodies.</text>
</comment>
<comment type="similarity">
    <text evidence="5">Belongs to the TRAF3IP1 family.</text>
</comment>
<proteinExistence type="inferred from homology"/>
<reference evidence="7 9" key="1">
    <citation type="journal article" date="2007" name="Science">
        <title>Genomic minimalism in the early diverging intestinal parasite Giardia lamblia.</title>
        <authorList>
            <person name="Morrison H.G."/>
            <person name="McArthur A.G."/>
            <person name="Gillin F.D."/>
            <person name="Aley S.B."/>
            <person name="Adam R.D."/>
            <person name="Olsen G.J."/>
            <person name="Best A.A."/>
            <person name="Cande W.Z."/>
            <person name="Chen F."/>
            <person name="Cipriano M.J."/>
            <person name="Davids B.J."/>
            <person name="Dawson S.C."/>
            <person name="Elmendorf H.G."/>
            <person name="Hehl A.B."/>
            <person name="Holder M.E."/>
            <person name="Huse S.M."/>
            <person name="Kim U.U."/>
            <person name="Lasek-Nesselquist E."/>
            <person name="Manning G."/>
            <person name="Nigam A."/>
            <person name="Nixon J.E.J."/>
            <person name="Palm D."/>
            <person name="Passamaneck N.E."/>
            <person name="Prabhu A."/>
            <person name="Reich C.I."/>
            <person name="Reiner D.S."/>
            <person name="Samuelson J."/>
            <person name="Svard S.G."/>
            <person name="Sogin M.L."/>
        </authorList>
    </citation>
    <scope>NUCLEOTIDE SEQUENCE [LARGE SCALE GENOMIC DNA]</scope>
    <source>
        <strain evidence="9">ATCC 50803 / WB clone C6</strain>
    </source>
</reference>
<reference evidence="8" key="2">
    <citation type="submission" date="2019-07" db="EMBL/GenBank/DDBJ databases">
        <title>New Giardia intestinalis WB genome in near-complete chromosomes.</title>
        <authorList>
            <person name="Xu F."/>
            <person name="Jex A."/>
            <person name="Svard S.G."/>
        </authorList>
    </citation>
    <scope>NUCLEOTIDE SEQUENCE [LARGE SCALE GENOMIC DNA]</scope>
    <source>
        <strain evidence="8">ATCC 50803 / WB clone C6</strain>
    </source>
</reference>
<reference key="3">
    <citation type="journal article" date="2019" name="Elife">
        <title>Length-dependent disassembly maintains four different flagellar lengths in Giardia.</title>
        <authorList>
            <person name="McInally S.G."/>
            <person name="Kondev J."/>
            <person name="Dawson S.C."/>
        </authorList>
    </citation>
    <scope>FUNCTION</scope>
    <scope>SUBCELLULAR LOCATION</scope>
    <source>
        <strain evidence="4">ATCC 50803 / WB clone C6</strain>
    </source>
</reference>
<sequence length="465" mass="52343">MITIETELINSTIDALKELISRPPLTEKLLSRPPFKYILDICKAVSAATGFPSPESCNYDDITDREERTAFLTSIIGQITDQLGVPVDVQIKSILAGKDVPKTLRMLVMLAQAAKLFKVRSNSSQPPPQQAPRETVASPPQEDLEALAREKAEKERQRREQEQQERERKERERQEKEREEREKHELESRERAEAEQWKQKQQQQQQQQQSAISPQKSPPKVRFADDDKTRVEEHQPVIERPHFNRPPPSQHSRRMAVTATSEPSAPQPSAMRLVKVVREESSDESNQDLNQNAGQDGGFTMGLDAEWCDEMLPGEFPLDTGAPAPSSTHGELVANILDTAEAYNVALHGDGSKKPTGLSTQRDKKPIDSYSQPVQKLISHISAIIRKSVPYAKHTAFLDEHILTMRTELHTASEAVTKLLSTSLKQESSLKQANNACESKLHSLKEQIYSLRQAQLELLHSTLAL</sequence>